<gene>
    <name evidence="1" type="primary">rplY</name>
    <name type="ordered locus">YpsIP31758_2720</name>
</gene>
<reference key="1">
    <citation type="journal article" date="2007" name="PLoS Genet.">
        <title>The complete genome sequence of Yersinia pseudotuberculosis IP31758, the causative agent of Far East scarlet-like fever.</title>
        <authorList>
            <person name="Eppinger M."/>
            <person name="Rosovitz M.J."/>
            <person name="Fricke W.F."/>
            <person name="Rasko D.A."/>
            <person name="Kokorina G."/>
            <person name="Fayolle C."/>
            <person name="Lindler L.E."/>
            <person name="Carniel E."/>
            <person name="Ravel J."/>
        </authorList>
    </citation>
    <scope>NUCLEOTIDE SEQUENCE [LARGE SCALE GENOMIC DNA]</scope>
    <source>
        <strain>IP 31758</strain>
    </source>
</reference>
<protein>
    <recommendedName>
        <fullName evidence="1">Large ribosomal subunit protein bL25</fullName>
    </recommendedName>
    <alternativeName>
        <fullName evidence="2">50S ribosomal protein L25</fullName>
    </alternativeName>
</protein>
<comment type="function">
    <text evidence="1">This is one of the proteins that binds to the 5S RNA in the ribosome where it forms part of the central protuberance.</text>
</comment>
<comment type="subunit">
    <text evidence="1">Part of the 50S ribosomal subunit; part of the 5S rRNA/L5/L18/L25 subcomplex. Contacts the 5S rRNA. Binds to the 5S rRNA independently of L5 and L18.</text>
</comment>
<comment type="similarity">
    <text evidence="1">Belongs to the bacterial ribosomal protein bL25 family.</text>
</comment>
<sequence length="94" mass="10406">MTTINVEVRNDQGKGASRRLRAANKFPAIVYGGSEAAISIALDHDTTKNLELKPGFYDSVLTLVIDGKETKVKVQAVQRHAFKPKLTHIDFVRV</sequence>
<proteinExistence type="inferred from homology"/>
<dbReference type="EMBL" id="CP000720">
    <property type="protein sequence ID" value="ABS48229.1"/>
    <property type="molecule type" value="Genomic_DNA"/>
</dbReference>
<dbReference type="RefSeq" id="WP_002208834.1">
    <property type="nucleotide sequence ID" value="NC_009708.1"/>
</dbReference>
<dbReference type="SMR" id="A7FKA7"/>
<dbReference type="GeneID" id="96664865"/>
<dbReference type="KEGG" id="ypi:YpsIP31758_2720"/>
<dbReference type="HOGENOM" id="CLU_137946_0_0_6"/>
<dbReference type="Proteomes" id="UP000002412">
    <property type="component" value="Chromosome"/>
</dbReference>
<dbReference type="GO" id="GO:0022625">
    <property type="term" value="C:cytosolic large ribosomal subunit"/>
    <property type="evidence" value="ECO:0007669"/>
    <property type="project" value="TreeGrafter"/>
</dbReference>
<dbReference type="GO" id="GO:0008097">
    <property type="term" value="F:5S rRNA binding"/>
    <property type="evidence" value="ECO:0007669"/>
    <property type="project" value="InterPro"/>
</dbReference>
<dbReference type="GO" id="GO:0003735">
    <property type="term" value="F:structural constituent of ribosome"/>
    <property type="evidence" value="ECO:0007669"/>
    <property type="project" value="InterPro"/>
</dbReference>
<dbReference type="GO" id="GO:0006412">
    <property type="term" value="P:translation"/>
    <property type="evidence" value="ECO:0007669"/>
    <property type="project" value="UniProtKB-UniRule"/>
</dbReference>
<dbReference type="CDD" id="cd00495">
    <property type="entry name" value="Ribosomal_L25_TL5_CTC"/>
    <property type="match status" value="1"/>
</dbReference>
<dbReference type="FunFam" id="2.40.240.10:FF:000002">
    <property type="entry name" value="50S ribosomal protein L25"/>
    <property type="match status" value="1"/>
</dbReference>
<dbReference type="Gene3D" id="2.40.240.10">
    <property type="entry name" value="Ribosomal Protein L25, Chain P"/>
    <property type="match status" value="1"/>
</dbReference>
<dbReference type="HAMAP" id="MF_01336">
    <property type="entry name" value="Ribosomal_bL25"/>
    <property type="match status" value="1"/>
</dbReference>
<dbReference type="InterPro" id="IPR020056">
    <property type="entry name" value="Rbsml_bL25/Gln-tRNA_synth_N"/>
</dbReference>
<dbReference type="InterPro" id="IPR011035">
    <property type="entry name" value="Ribosomal_bL25/Gln-tRNA_synth"/>
</dbReference>
<dbReference type="InterPro" id="IPR020055">
    <property type="entry name" value="Ribosomal_bL25_short"/>
</dbReference>
<dbReference type="InterPro" id="IPR029751">
    <property type="entry name" value="Ribosomal_L25_dom"/>
</dbReference>
<dbReference type="InterPro" id="IPR020930">
    <property type="entry name" value="Ribosomal_uL5_bac-type"/>
</dbReference>
<dbReference type="NCBIfam" id="NF004612">
    <property type="entry name" value="PRK05943.1"/>
    <property type="match status" value="1"/>
</dbReference>
<dbReference type="PANTHER" id="PTHR33284">
    <property type="entry name" value="RIBOSOMAL PROTEIN L25/GLN-TRNA SYNTHETASE, ANTI-CODON-BINDING DOMAIN-CONTAINING PROTEIN"/>
    <property type="match status" value="1"/>
</dbReference>
<dbReference type="PANTHER" id="PTHR33284:SF1">
    <property type="entry name" value="RIBOSOMAL PROTEIN L25_GLN-TRNA SYNTHETASE, ANTI-CODON-BINDING DOMAIN-CONTAINING PROTEIN"/>
    <property type="match status" value="1"/>
</dbReference>
<dbReference type="Pfam" id="PF01386">
    <property type="entry name" value="Ribosomal_L25p"/>
    <property type="match status" value="1"/>
</dbReference>
<dbReference type="SUPFAM" id="SSF50715">
    <property type="entry name" value="Ribosomal protein L25-like"/>
    <property type="match status" value="1"/>
</dbReference>
<keyword id="KW-0687">Ribonucleoprotein</keyword>
<keyword id="KW-0689">Ribosomal protein</keyword>
<keyword id="KW-0694">RNA-binding</keyword>
<keyword id="KW-0699">rRNA-binding</keyword>
<feature type="chain" id="PRO_1000067634" description="Large ribosomal subunit protein bL25">
    <location>
        <begin position="1"/>
        <end position="94"/>
    </location>
</feature>
<organism>
    <name type="scientific">Yersinia pseudotuberculosis serotype O:1b (strain IP 31758)</name>
    <dbReference type="NCBI Taxonomy" id="349747"/>
    <lineage>
        <taxon>Bacteria</taxon>
        <taxon>Pseudomonadati</taxon>
        <taxon>Pseudomonadota</taxon>
        <taxon>Gammaproteobacteria</taxon>
        <taxon>Enterobacterales</taxon>
        <taxon>Yersiniaceae</taxon>
        <taxon>Yersinia</taxon>
    </lineage>
</organism>
<accession>A7FKA7</accession>
<evidence type="ECO:0000255" key="1">
    <source>
        <dbReference type="HAMAP-Rule" id="MF_01336"/>
    </source>
</evidence>
<evidence type="ECO:0000305" key="2"/>
<name>RL25_YERP3</name>